<reference key="1">
    <citation type="journal article" date="2004" name="Nat. Biotechnol.">
        <title>Complete genome sequence of the metabolically versatile photosynthetic bacterium Rhodopseudomonas palustris.</title>
        <authorList>
            <person name="Larimer F.W."/>
            <person name="Chain P."/>
            <person name="Hauser L."/>
            <person name="Lamerdin J.E."/>
            <person name="Malfatti S."/>
            <person name="Do L."/>
            <person name="Land M.L."/>
            <person name="Pelletier D.A."/>
            <person name="Beatty J.T."/>
            <person name="Lang A.S."/>
            <person name="Tabita F.R."/>
            <person name="Gibson J.L."/>
            <person name="Hanson T.E."/>
            <person name="Bobst C."/>
            <person name="Torres y Torres J.L."/>
            <person name="Peres C."/>
            <person name="Harrison F.H."/>
            <person name="Gibson J."/>
            <person name="Harwood C.S."/>
        </authorList>
    </citation>
    <scope>NUCLEOTIDE SEQUENCE [LARGE SCALE GENOMIC DNA]</scope>
    <source>
        <strain>ATCC BAA-98 / CGA009</strain>
    </source>
</reference>
<reference key="2">
    <citation type="journal article" date="2004" name="J. Proteome Res.">
        <title>Characterization of the 70S ribosome from Rhodopseudomonas palustris using an integrated 'top-down' and 'bottom-up' mass spectrometric approach.</title>
        <authorList>
            <person name="Strader M.B."/>
            <person name="VerBerkmoes N.C."/>
            <person name="Tabb D.L."/>
            <person name="Connelly H.M."/>
            <person name="Barton J.W."/>
            <person name="Bruce B.D."/>
            <person name="Pelletier D.A."/>
            <person name="Davison B.H."/>
            <person name="Hettich R.L."/>
            <person name="Larimer F.W."/>
            <person name="Hurst G.B."/>
        </authorList>
    </citation>
    <scope>PROTEIN SEQUENCE OF 32-51</scope>
    <scope>POST-TRANSLATIONAL MODIFICATIONS</scope>
    <scope>MASS SPECTROMETRY</scope>
    <source>
        <strain>ATCC BAA-98 / CGA009</strain>
    </source>
</reference>
<proteinExistence type="evidence at protein level"/>
<name>RL11_RHOPA</name>
<evidence type="ECO:0000255" key="1">
    <source>
        <dbReference type="HAMAP-Rule" id="MF_00736"/>
    </source>
</evidence>
<evidence type="ECO:0000269" key="2">
    <source>
    </source>
</evidence>
<evidence type="ECO:0000305" key="3"/>
<feature type="initiator methionine" description="Removed">
    <location>
        <position position="1"/>
    </location>
</feature>
<feature type="chain" id="PRO_0000104350" description="Large ribosomal subunit protein uL11">
    <location>
        <begin position="2"/>
        <end position="142"/>
    </location>
</feature>
<gene>
    <name evidence="1" type="primary">rplK</name>
    <name type="ordered locus">RPA3273</name>
</gene>
<organism>
    <name type="scientific">Rhodopseudomonas palustris (strain ATCC BAA-98 / CGA009)</name>
    <dbReference type="NCBI Taxonomy" id="258594"/>
    <lineage>
        <taxon>Bacteria</taxon>
        <taxon>Pseudomonadati</taxon>
        <taxon>Pseudomonadota</taxon>
        <taxon>Alphaproteobacteria</taxon>
        <taxon>Hyphomicrobiales</taxon>
        <taxon>Nitrobacteraceae</taxon>
        <taxon>Rhodopseudomonas</taxon>
    </lineage>
</organism>
<keyword id="KW-0903">Direct protein sequencing</keyword>
<keyword id="KW-0488">Methylation</keyword>
<keyword id="KW-0687">Ribonucleoprotein</keyword>
<keyword id="KW-0689">Ribosomal protein</keyword>
<keyword id="KW-0694">RNA-binding</keyword>
<keyword id="KW-0699">rRNA-binding</keyword>
<sequence>MAKKVTGYLKLQVPAGAANPSPPIGPALGQRGLNIMEFCKAFNAQTQKEEKNTPIPVVITIYADRSFTFEMKTPPMSYFLKQAAKIQSGSKLPGRDFAGKVTSAQVREIAEKKMKDLNCDTVESAMRMVEGSARSMGLRVEG</sequence>
<accession>P62441</accession>
<comment type="function">
    <text evidence="1">Forms part of the ribosomal stalk which helps the ribosome interact with GTP-bound translation factors.</text>
</comment>
<comment type="subunit">
    <text evidence="1">Part of the ribosomal stalk of the 50S ribosomal subunit. Interacts with L10 and the large rRNA to form the base of the stalk. L10 forms an elongated spine to which L12 dimers bind in a sequential fashion forming a multimeric L10(L12)X complex.</text>
</comment>
<comment type="PTM">
    <text>Lys-40 is trimethylated or acetylated; other modifications may also exist.</text>
</comment>
<comment type="mass spectrometry"/>
<comment type="similarity">
    <text evidence="1">Belongs to the universal ribosomal protein uL11 family.</text>
</comment>
<protein>
    <recommendedName>
        <fullName evidence="1">Large ribosomal subunit protein uL11</fullName>
    </recommendedName>
    <alternativeName>
        <fullName evidence="3">50S ribosomal protein L11</fullName>
    </alternativeName>
    <alternativeName>
        <fullName>RRP-L11</fullName>
    </alternativeName>
</protein>
<dbReference type="EMBL" id="BX572603">
    <property type="protein sequence ID" value="CAE28714.1"/>
    <property type="molecule type" value="Genomic_DNA"/>
</dbReference>
<dbReference type="RefSeq" id="WP_011158816.1">
    <property type="nucleotide sequence ID" value="NZ_CP116810.1"/>
</dbReference>
<dbReference type="SMR" id="P62441"/>
<dbReference type="IntAct" id="P62441">
    <property type="interactions" value="1"/>
</dbReference>
<dbReference type="STRING" id="258594.RPA3273"/>
<dbReference type="GeneID" id="66894359"/>
<dbReference type="eggNOG" id="COG0080">
    <property type="taxonomic scope" value="Bacteria"/>
</dbReference>
<dbReference type="HOGENOM" id="CLU_074237_2_0_5"/>
<dbReference type="PhylomeDB" id="P62441"/>
<dbReference type="GO" id="GO:0022625">
    <property type="term" value="C:cytosolic large ribosomal subunit"/>
    <property type="evidence" value="ECO:0007669"/>
    <property type="project" value="TreeGrafter"/>
</dbReference>
<dbReference type="GO" id="GO:0070180">
    <property type="term" value="F:large ribosomal subunit rRNA binding"/>
    <property type="evidence" value="ECO:0007669"/>
    <property type="project" value="UniProtKB-UniRule"/>
</dbReference>
<dbReference type="GO" id="GO:0003735">
    <property type="term" value="F:structural constituent of ribosome"/>
    <property type="evidence" value="ECO:0007669"/>
    <property type="project" value="InterPro"/>
</dbReference>
<dbReference type="GO" id="GO:0006412">
    <property type="term" value="P:translation"/>
    <property type="evidence" value="ECO:0007669"/>
    <property type="project" value="UniProtKB-UniRule"/>
</dbReference>
<dbReference type="CDD" id="cd00349">
    <property type="entry name" value="Ribosomal_L11"/>
    <property type="match status" value="1"/>
</dbReference>
<dbReference type="FunFam" id="1.10.10.250:FF:000001">
    <property type="entry name" value="50S ribosomal protein L11"/>
    <property type="match status" value="1"/>
</dbReference>
<dbReference type="FunFam" id="3.30.1550.10:FF:000001">
    <property type="entry name" value="50S ribosomal protein L11"/>
    <property type="match status" value="1"/>
</dbReference>
<dbReference type="Gene3D" id="1.10.10.250">
    <property type="entry name" value="Ribosomal protein L11, C-terminal domain"/>
    <property type="match status" value="1"/>
</dbReference>
<dbReference type="Gene3D" id="3.30.1550.10">
    <property type="entry name" value="Ribosomal protein L11/L12, N-terminal domain"/>
    <property type="match status" value="1"/>
</dbReference>
<dbReference type="HAMAP" id="MF_00736">
    <property type="entry name" value="Ribosomal_uL11"/>
    <property type="match status" value="1"/>
</dbReference>
<dbReference type="InterPro" id="IPR000911">
    <property type="entry name" value="Ribosomal_uL11"/>
</dbReference>
<dbReference type="InterPro" id="IPR006519">
    <property type="entry name" value="Ribosomal_uL11_bac-typ"/>
</dbReference>
<dbReference type="InterPro" id="IPR020783">
    <property type="entry name" value="Ribosomal_uL11_C"/>
</dbReference>
<dbReference type="InterPro" id="IPR036769">
    <property type="entry name" value="Ribosomal_uL11_C_sf"/>
</dbReference>
<dbReference type="InterPro" id="IPR020785">
    <property type="entry name" value="Ribosomal_uL11_CS"/>
</dbReference>
<dbReference type="InterPro" id="IPR020784">
    <property type="entry name" value="Ribosomal_uL11_N"/>
</dbReference>
<dbReference type="InterPro" id="IPR036796">
    <property type="entry name" value="Ribosomal_uL11_N_sf"/>
</dbReference>
<dbReference type="NCBIfam" id="TIGR01632">
    <property type="entry name" value="L11_bact"/>
    <property type="match status" value="1"/>
</dbReference>
<dbReference type="PANTHER" id="PTHR11661">
    <property type="entry name" value="60S RIBOSOMAL PROTEIN L12"/>
    <property type="match status" value="1"/>
</dbReference>
<dbReference type="PANTHER" id="PTHR11661:SF1">
    <property type="entry name" value="LARGE RIBOSOMAL SUBUNIT PROTEIN UL11M"/>
    <property type="match status" value="1"/>
</dbReference>
<dbReference type="Pfam" id="PF00298">
    <property type="entry name" value="Ribosomal_L11"/>
    <property type="match status" value="1"/>
</dbReference>
<dbReference type="Pfam" id="PF03946">
    <property type="entry name" value="Ribosomal_L11_N"/>
    <property type="match status" value="1"/>
</dbReference>
<dbReference type="SMART" id="SM00649">
    <property type="entry name" value="RL11"/>
    <property type="match status" value="1"/>
</dbReference>
<dbReference type="SUPFAM" id="SSF54747">
    <property type="entry name" value="Ribosomal L11/L12e N-terminal domain"/>
    <property type="match status" value="1"/>
</dbReference>
<dbReference type="SUPFAM" id="SSF46906">
    <property type="entry name" value="Ribosomal protein L11, C-terminal domain"/>
    <property type="match status" value="1"/>
</dbReference>
<dbReference type="PROSITE" id="PS00359">
    <property type="entry name" value="RIBOSOMAL_L11"/>
    <property type="match status" value="1"/>
</dbReference>